<feature type="chain" id="PRO_0000320802" description="Protein translocase subunit SecA">
    <location>
        <begin position="1"/>
        <end position="900"/>
    </location>
</feature>
<feature type="region of interest" description="Disordered" evidence="2">
    <location>
        <begin position="849"/>
        <end position="900"/>
    </location>
</feature>
<feature type="compositionally biased region" description="Basic residues" evidence="2">
    <location>
        <begin position="889"/>
        <end position="900"/>
    </location>
</feature>
<feature type="binding site" evidence="1">
    <location>
        <position position="87"/>
    </location>
    <ligand>
        <name>ATP</name>
        <dbReference type="ChEBI" id="CHEBI:30616"/>
    </ligand>
</feature>
<feature type="binding site" evidence="1">
    <location>
        <begin position="105"/>
        <end position="109"/>
    </location>
    <ligand>
        <name>ATP</name>
        <dbReference type="ChEBI" id="CHEBI:30616"/>
    </ligand>
</feature>
<feature type="binding site" evidence="1">
    <location>
        <position position="512"/>
    </location>
    <ligand>
        <name>ATP</name>
        <dbReference type="ChEBI" id="CHEBI:30616"/>
    </ligand>
</feature>
<feature type="binding site" evidence="1">
    <location>
        <position position="883"/>
    </location>
    <ligand>
        <name>Zn(2+)</name>
        <dbReference type="ChEBI" id="CHEBI:29105"/>
    </ligand>
</feature>
<feature type="binding site" evidence="1">
    <location>
        <position position="885"/>
    </location>
    <ligand>
        <name>Zn(2+)</name>
        <dbReference type="ChEBI" id="CHEBI:29105"/>
    </ligand>
</feature>
<feature type="binding site" evidence="1">
    <location>
        <position position="894"/>
    </location>
    <ligand>
        <name>Zn(2+)</name>
        <dbReference type="ChEBI" id="CHEBI:29105"/>
    </ligand>
</feature>
<feature type="binding site" evidence="1">
    <location>
        <position position="895"/>
    </location>
    <ligand>
        <name>Zn(2+)</name>
        <dbReference type="ChEBI" id="CHEBI:29105"/>
    </ligand>
</feature>
<evidence type="ECO:0000255" key="1">
    <source>
        <dbReference type="HAMAP-Rule" id="MF_01382"/>
    </source>
</evidence>
<evidence type="ECO:0000256" key="2">
    <source>
        <dbReference type="SAM" id="MobiDB-lite"/>
    </source>
</evidence>
<name>SECA_PECAS</name>
<sequence>MVMNILTKIFGSRNDRTLRRMRKNVDVISRLEPEMEKLSDEELQAKTLEFRVRLEKGEKLENLLPEAFAVVRESSKRVFGMRHFDVQLLGGMVLNERCIAEMRTGEGKTLTATLPAYLNALTGRGVHVVTVNDYLAQRDAENNRPLFEFLGLSVGINLPGMPAPAKREAYAADITYGTNNEYGFDYLRDNMAFSPEERVQRKLYYALVDEVDSILIDEARTPLIISGPAEDSSELYISVNKIIPHLIRQDKEDSDTFHGEGHFSVDEKARQVNLTERGLVLVEELLVKEGIMEEGESLYSPTNIMLMHHVTAALRAHVLFARDVDYIVKDGEVIIVDEHTGRTMQGRRWSDGLHQAVEAKEKVAIQNENQTLASITFQNYFRLYEKLAGMTGTADTEAFEFSSIYKLDTIVVPTNRPMIRKDLPDLVYMTEQEKIDAIIEDIKDRSVKGQPILVGTISIEKSEVVSQALEKAGIKHSVLNAKFHAMEADIVAQAGQSGAVTIATNMAGRGTDIVLGGSWQAEVAHLENPDDEQIAEIKAAWKVRHDAVLAAGGLHIIGTERHESRRIDNQLRGRSGRQGDAGSSRFYLSMEDALMRIFASDRVSNMMRKLGMKPGEAIEHPWVTKAIANAQRKVESRNFDIRKQLLEYDDVASDQRRAIYTQRNELLDVSDISETITSIREDVFKTTIDSYIPPQSLEEMWDTEGLEQRLKNDFDLDMPIKAWLDKEPELHEETLRERIFQQALDVYHRKEEVVGDEVMRNFEKGVMLQTLDSLWKEHLAAMDYLRQGIHLRGYAQKDPKQEYKRESFSMFAAMLESLKYEVISTLSKVQVRMPEEIEALELQRREEAERLAQQQQFSHQEEDSLNTGSPAQADRKIGRNDPCPCGSGKKYKQCHGRLQK</sequence>
<comment type="function">
    <text evidence="1">Part of the Sec protein translocase complex. Interacts with the SecYEG preprotein conducting channel. Has a central role in coupling the hydrolysis of ATP to the transfer of proteins into and across the cell membrane, serving both as a receptor for the preprotein-SecB complex and as an ATP-driven molecular motor driving the stepwise translocation of polypeptide chains across the membrane.</text>
</comment>
<comment type="catalytic activity">
    <reaction evidence="1">
        <text>ATP + H2O + cellular proteinSide 1 = ADP + phosphate + cellular proteinSide 2.</text>
        <dbReference type="EC" id="7.4.2.8"/>
    </reaction>
</comment>
<comment type="cofactor">
    <cofactor evidence="1">
        <name>Zn(2+)</name>
        <dbReference type="ChEBI" id="CHEBI:29105"/>
    </cofactor>
    <text evidence="1">May bind 1 zinc ion per subunit.</text>
</comment>
<comment type="subunit">
    <text evidence="1">Monomer and homodimer. Part of the essential Sec protein translocation apparatus which comprises SecA, SecYEG and auxiliary proteins SecDF-YajC and YidC.</text>
</comment>
<comment type="subcellular location">
    <subcellularLocation>
        <location evidence="1">Cell inner membrane</location>
        <topology evidence="1">Peripheral membrane protein</topology>
        <orientation evidence="1">Cytoplasmic side</orientation>
    </subcellularLocation>
    <subcellularLocation>
        <location evidence="1">Cytoplasm</location>
    </subcellularLocation>
    <text evidence="1">Distribution is 50-50.</text>
</comment>
<comment type="induction">
    <text evidence="1">Repressed under conditions of excess protein secretion capacity and derepressed when protein secretion becomes limiting. This is regulated by SecM.</text>
</comment>
<comment type="similarity">
    <text evidence="1">Belongs to the SecA family.</text>
</comment>
<gene>
    <name evidence="1" type="primary">secA</name>
    <name type="ordered locus">ECA3806</name>
</gene>
<dbReference type="EC" id="7.4.2.8" evidence="1"/>
<dbReference type="EMBL" id="BX950851">
    <property type="protein sequence ID" value="CAG76705.1"/>
    <property type="molecule type" value="Genomic_DNA"/>
</dbReference>
<dbReference type="RefSeq" id="WP_011095307.1">
    <property type="nucleotide sequence ID" value="NC_004547.2"/>
</dbReference>
<dbReference type="SMR" id="Q6D0J2"/>
<dbReference type="STRING" id="218491.ECA3806"/>
<dbReference type="GeneID" id="57210425"/>
<dbReference type="KEGG" id="eca:ECA3806"/>
<dbReference type="PATRIC" id="fig|218491.5.peg.3861"/>
<dbReference type="eggNOG" id="COG0653">
    <property type="taxonomic scope" value="Bacteria"/>
</dbReference>
<dbReference type="HOGENOM" id="CLU_005314_3_0_6"/>
<dbReference type="OrthoDB" id="9805579at2"/>
<dbReference type="Proteomes" id="UP000007966">
    <property type="component" value="Chromosome"/>
</dbReference>
<dbReference type="GO" id="GO:0031522">
    <property type="term" value="C:cell envelope Sec protein transport complex"/>
    <property type="evidence" value="ECO:0007669"/>
    <property type="project" value="TreeGrafter"/>
</dbReference>
<dbReference type="GO" id="GO:0005829">
    <property type="term" value="C:cytosol"/>
    <property type="evidence" value="ECO:0007669"/>
    <property type="project" value="TreeGrafter"/>
</dbReference>
<dbReference type="GO" id="GO:0005886">
    <property type="term" value="C:plasma membrane"/>
    <property type="evidence" value="ECO:0007669"/>
    <property type="project" value="UniProtKB-SubCell"/>
</dbReference>
<dbReference type="GO" id="GO:0005524">
    <property type="term" value="F:ATP binding"/>
    <property type="evidence" value="ECO:0007669"/>
    <property type="project" value="UniProtKB-UniRule"/>
</dbReference>
<dbReference type="GO" id="GO:0046872">
    <property type="term" value="F:metal ion binding"/>
    <property type="evidence" value="ECO:0007669"/>
    <property type="project" value="UniProtKB-KW"/>
</dbReference>
<dbReference type="GO" id="GO:0008564">
    <property type="term" value="F:protein-exporting ATPase activity"/>
    <property type="evidence" value="ECO:0007669"/>
    <property type="project" value="UniProtKB-EC"/>
</dbReference>
<dbReference type="GO" id="GO:0065002">
    <property type="term" value="P:intracellular protein transmembrane transport"/>
    <property type="evidence" value="ECO:0007669"/>
    <property type="project" value="UniProtKB-UniRule"/>
</dbReference>
<dbReference type="GO" id="GO:0017038">
    <property type="term" value="P:protein import"/>
    <property type="evidence" value="ECO:0007669"/>
    <property type="project" value="InterPro"/>
</dbReference>
<dbReference type="GO" id="GO:0006605">
    <property type="term" value="P:protein targeting"/>
    <property type="evidence" value="ECO:0007669"/>
    <property type="project" value="UniProtKB-UniRule"/>
</dbReference>
<dbReference type="GO" id="GO:0043952">
    <property type="term" value="P:protein transport by the Sec complex"/>
    <property type="evidence" value="ECO:0007669"/>
    <property type="project" value="TreeGrafter"/>
</dbReference>
<dbReference type="CDD" id="cd17928">
    <property type="entry name" value="DEXDc_SecA"/>
    <property type="match status" value="1"/>
</dbReference>
<dbReference type="CDD" id="cd18803">
    <property type="entry name" value="SF2_C_secA"/>
    <property type="match status" value="1"/>
</dbReference>
<dbReference type="FunFam" id="1.10.3060.10:FF:000001">
    <property type="entry name" value="Preprotein translocase subunit SecA"/>
    <property type="match status" value="1"/>
</dbReference>
<dbReference type="FunFam" id="3.40.50.300:FF:000081">
    <property type="entry name" value="Preprotein translocase subunit SecA"/>
    <property type="match status" value="1"/>
</dbReference>
<dbReference type="FunFam" id="3.40.50.300:FF:000113">
    <property type="entry name" value="Preprotein translocase subunit SecA"/>
    <property type="match status" value="1"/>
</dbReference>
<dbReference type="FunFam" id="3.90.1440.10:FF:000001">
    <property type="entry name" value="Preprotein translocase subunit SecA"/>
    <property type="match status" value="1"/>
</dbReference>
<dbReference type="Gene3D" id="1.10.3060.10">
    <property type="entry name" value="Helical scaffold and wing domains of SecA"/>
    <property type="match status" value="1"/>
</dbReference>
<dbReference type="Gene3D" id="3.40.50.300">
    <property type="entry name" value="P-loop containing nucleotide triphosphate hydrolases"/>
    <property type="match status" value="2"/>
</dbReference>
<dbReference type="Gene3D" id="3.90.1440.10">
    <property type="entry name" value="SecA, preprotein cross-linking domain"/>
    <property type="match status" value="1"/>
</dbReference>
<dbReference type="HAMAP" id="MF_01382">
    <property type="entry name" value="SecA"/>
    <property type="match status" value="1"/>
</dbReference>
<dbReference type="InterPro" id="IPR014001">
    <property type="entry name" value="Helicase_ATP-bd"/>
</dbReference>
<dbReference type="InterPro" id="IPR001650">
    <property type="entry name" value="Helicase_C-like"/>
</dbReference>
<dbReference type="InterPro" id="IPR027417">
    <property type="entry name" value="P-loop_NTPase"/>
</dbReference>
<dbReference type="InterPro" id="IPR004027">
    <property type="entry name" value="SEC_C_motif"/>
</dbReference>
<dbReference type="InterPro" id="IPR000185">
    <property type="entry name" value="SecA"/>
</dbReference>
<dbReference type="InterPro" id="IPR020937">
    <property type="entry name" value="SecA_CS"/>
</dbReference>
<dbReference type="InterPro" id="IPR011115">
    <property type="entry name" value="SecA_DEAD"/>
</dbReference>
<dbReference type="InterPro" id="IPR014018">
    <property type="entry name" value="SecA_motor_DEAD"/>
</dbReference>
<dbReference type="InterPro" id="IPR011130">
    <property type="entry name" value="SecA_preprotein_X-link_dom"/>
</dbReference>
<dbReference type="InterPro" id="IPR044722">
    <property type="entry name" value="SecA_SF2_C"/>
</dbReference>
<dbReference type="InterPro" id="IPR011116">
    <property type="entry name" value="SecA_Wing/Scaffold"/>
</dbReference>
<dbReference type="InterPro" id="IPR036266">
    <property type="entry name" value="SecA_Wing/Scaffold_sf"/>
</dbReference>
<dbReference type="InterPro" id="IPR036670">
    <property type="entry name" value="SecA_X-link_sf"/>
</dbReference>
<dbReference type="NCBIfam" id="NF009538">
    <property type="entry name" value="PRK12904.1"/>
    <property type="match status" value="1"/>
</dbReference>
<dbReference type="NCBIfam" id="TIGR00963">
    <property type="entry name" value="secA"/>
    <property type="match status" value="1"/>
</dbReference>
<dbReference type="PANTHER" id="PTHR30612:SF0">
    <property type="entry name" value="CHLOROPLAST PROTEIN-TRANSPORTING ATPASE"/>
    <property type="match status" value="1"/>
</dbReference>
<dbReference type="PANTHER" id="PTHR30612">
    <property type="entry name" value="SECA INNER MEMBRANE COMPONENT OF SEC PROTEIN SECRETION SYSTEM"/>
    <property type="match status" value="1"/>
</dbReference>
<dbReference type="Pfam" id="PF21090">
    <property type="entry name" value="P-loop_SecA"/>
    <property type="match status" value="1"/>
</dbReference>
<dbReference type="Pfam" id="PF02810">
    <property type="entry name" value="SEC-C"/>
    <property type="match status" value="1"/>
</dbReference>
<dbReference type="Pfam" id="PF07517">
    <property type="entry name" value="SecA_DEAD"/>
    <property type="match status" value="1"/>
</dbReference>
<dbReference type="Pfam" id="PF01043">
    <property type="entry name" value="SecA_PP_bind"/>
    <property type="match status" value="1"/>
</dbReference>
<dbReference type="Pfam" id="PF07516">
    <property type="entry name" value="SecA_SW"/>
    <property type="match status" value="1"/>
</dbReference>
<dbReference type="PRINTS" id="PR00906">
    <property type="entry name" value="SECA"/>
</dbReference>
<dbReference type="SMART" id="SM00957">
    <property type="entry name" value="SecA_DEAD"/>
    <property type="match status" value="1"/>
</dbReference>
<dbReference type="SMART" id="SM00958">
    <property type="entry name" value="SecA_PP_bind"/>
    <property type="match status" value="1"/>
</dbReference>
<dbReference type="SUPFAM" id="SSF81886">
    <property type="entry name" value="Helical scaffold and wing domains of SecA"/>
    <property type="match status" value="1"/>
</dbReference>
<dbReference type="SUPFAM" id="SSF52540">
    <property type="entry name" value="P-loop containing nucleoside triphosphate hydrolases"/>
    <property type="match status" value="2"/>
</dbReference>
<dbReference type="SUPFAM" id="SSF81767">
    <property type="entry name" value="Pre-protein crosslinking domain of SecA"/>
    <property type="match status" value="1"/>
</dbReference>
<dbReference type="PROSITE" id="PS01312">
    <property type="entry name" value="SECA"/>
    <property type="match status" value="1"/>
</dbReference>
<dbReference type="PROSITE" id="PS51196">
    <property type="entry name" value="SECA_MOTOR_DEAD"/>
    <property type="match status" value="1"/>
</dbReference>
<protein>
    <recommendedName>
        <fullName evidence="1">Protein translocase subunit SecA</fullName>
        <ecNumber evidence="1">7.4.2.8</ecNumber>
    </recommendedName>
</protein>
<reference key="1">
    <citation type="journal article" date="2004" name="Proc. Natl. Acad. Sci. U.S.A.">
        <title>Genome sequence of the enterobacterial phytopathogen Erwinia carotovora subsp. atroseptica and characterization of virulence factors.</title>
        <authorList>
            <person name="Bell K.S."/>
            <person name="Sebaihia M."/>
            <person name="Pritchard L."/>
            <person name="Holden M.T.G."/>
            <person name="Hyman L.J."/>
            <person name="Holeva M.C."/>
            <person name="Thomson N.R."/>
            <person name="Bentley S.D."/>
            <person name="Churcher L.J.C."/>
            <person name="Mungall K."/>
            <person name="Atkin R."/>
            <person name="Bason N."/>
            <person name="Brooks K."/>
            <person name="Chillingworth T."/>
            <person name="Clark K."/>
            <person name="Doggett J."/>
            <person name="Fraser A."/>
            <person name="Hance Z."/>
            <person name="Hauser H."/>
            <person name="Jagels K."/>
            <person name="Moule S."/>
            <person name="Norbertczak H."/>
            <person name="Ormond D."/>
            <person name="Price C."/>
            <person name="Quail M.A."/>
            <person name="Sanders M."/>
            <person name="Walker D."/>
            <person name="Whitehead S."/>
            <person name="Salmond G.P.C."/>
            <person name="Birch P.R.J."/>
            <person name="Parkhill J."/>
            <person name="Toth I.K."/>
        </authorList>
    </citation>
    <scope>NUCLEOTIDE SEQUENCE [LARGE SCALE GENOMIC DNA]</scope>
    <source>
        <strain>SCRI 1043 / ATCC BAA-672</strain>
    </source>
</reference>
<organism>
    <name type="scientific">Pectobacterium atrosepticum (strain SCRI 1043 / ATCC BAA-672)</name>
    <name type="common">Erwinia carotovora subsp. atroseptica</name>
    <dbReference type="NCBI Taxonomy" id="218491"/>
    <lineage>
        <taxon>Bacteria</taxon>
        <taxon>Pseudomonadati</taxon>
        <taxon>Pseudomonadota</taxon>
        <taxon>Gammaproteobacteria</taxon>
        <taxon>Enterobacterales</taxon>
        <taxon>Pectobacteriaceae</taxon>
        <taxon>Pectobacterium</taxon>
    </lineage>
</organism>
<accession>Q6D0J2</accession>
<proteinExistence type="inferred from homology"/>
<keyword id="KW-0067">ATP-binding</keyword>
<keyword id="KW-0997">Cell inner membrane</keyword>
<keyword id="KW-1003">Cell membrane</keyword>
<keyword id="KW-0963">Cytoplasm</keyword>
<keyword id="KW-0472">Membrane</keyword>
<keyword id="KW-0479">Metal-binding</keyword>
<keyword id="KW-0547">Nucleotide-binding</keyword>
<keyword id="KW-0653">Protein transport</keyword>
<keyword id="KW-1185">Reference proteome</keyword>
<keyword id="KW-1278">Translocase</keyword>
<keyword id="KW-0811">Translocation</keyword>
<keyword id="KW-0813">Transport</keyword>
<keyword id="KW-0862">Zinc</keyword>